<proteinExistence type="inferred from homology"/>
<protein>
    <recommendedName>
        <fullName>Dolichyl-diphosphooligosaccharide--protein glycosyltransferase subunit DAD1</fullName>
        <shortName>Oligosaccharyl transferase subunit DAD1</shortName>
    </recommendedName>
    <alternativeName>
        <fullName>Defender against cell death 1</fullName>
        <shortName>DAD-1</shortName>
    </alternativeName>
</protein>
<comment type="function">
    <text evidence="2">Subunit of the oligosaccharyl transferase (OST) complex that catalyzes the initial transfer of a defined glycan (Glc(3)Man(9)GlcNAc(2) in eukaryotes) from the lipid carrier dolichol-pyrophosphate to an asparagine residue within an Asn-X-Ser/Thr consensus motif in nascent polypeptide chains, the first step in protein N-glycosylation. N-glycosylation occurs cotranslationally and the complex associates with the Sec61 complex at the channel-forming translocon complex that mediates protein translocation across the endoplasmic reticulum (ER). All subunits are required for a maximal enzyme activity.</text>
</comment>
<comment type="pathway">
    <text>Protein modification; protein glycosylation.</text>
</comment>
<comment type="subunit">
    <text evidence="2">Component of the oligosaccharyltransferase (OST) complex.</text>
</comment>
<comment type="subcellular location">
    <subcellularLocation>
        <location evidence="1">Endoplasmic reticulum membrane</location>
        <topology evidence="1">Multi-pass membrane protein</topology>
    </subcellularLocation>
</comment>
<comment type="similarity">
    <text evidence="4">Belongs to the DAD/OST2 family.</text>
</comment>
<accession>O65085</accession>
<keyword id="KW-0053">Apoptosis</keyword>
<keyword id="KW-0256">Endoplasmic reticulum</keyword>
<keyword id="KW-0472">Membrane</keyword>
<keyword id="KW-0812">Transmembrane</keyword>
<keyword id="KW-1133">Transmembrane helix</keyword>
<feature type="chain" id="PRO_0000124030" description="Dolichyl-diphosphooligosaccharide--protein glycosyltransferase subunit DAD1">
    <location>
        <begin position="1"/>
        <end position="115"/>
    </location>
</feature>
<feature type="topological domain" description="Cytoplasmic" evidence="3">
    <location>
        <begin position="1"/>
        <end position="31"/>
    </location>
</feature>
<feature type="transmembrane region" description="Helical" evidence="3">
    <location>
        <begin position="32"/>
        <end position="52"/>
    </location>
</feature>
<feature type="topological domain" description="Lumenal" evidence="3">
    <location>
        <begin position="53"/>
        <end position="55"/>
    </location>
</feature>
<feature type="transmembrane region" description="Helical" evidence="3">
    <location>
        <begin position="56"/>
        <end position="76"/>
    </location>
</feature>
<feature type="topological domain" description="Cytoplasmic" evidence="3">
    <location>
        <begin position="77"/>
        <end position="94"/>
    </location>
</feature>
<feature type="transmembrane region" description="Helical" evidence="3">
    <location>
        <begin position="95"/>
        <end position="115"/>
    </location>
</feature>
<evidence type="ECO:0000250" key="1"/>
<evidence type="ECO:0000250" key="2">
    <source>
        <dbReference type="UniProtKB" id="P46964"/>
    </source>
</evidence>
<evidence type="ECO:0000255" key="3"/>
<evidence type="ECO:0000305" key="4"/>
<name>DAD1_PICMA</name>
<sequence>MGTSTAKEAHALIASLRSAYSATPTKLKIIDLYVVYAILTAVVQVVYMAIVGSFPFNAFLSGVLSCTGTAVLAVCLRMQVNKENREFKDLPPERAFADFVLCNLVLHLVIMNFLG</sequence>
<reference key="1">
    <citation type="journal article" date="1998" name="Genetics">
        <title>Sequence-tagged-site (STS) markers of arbitrary genes: development, characterization and analysis of linkage in black spruce.</title>
        <authorList>
            <person name="Perry D.J."/>
            <person name="Bousquet J."/>
        </authorList>
    </citation>
    <scope>NUCLEOTIDE SEQUENCE [MRNA]</scope>
</reference>
<organism>
    <name type="scientific">Picea mariana</name>
    <name type="common">Black spruce</name>
    <name type="synonym">Abies mariana</name>
    <dbReference type="NCBI Taxonomy" id="3335"/>
    <lineage>
        <taxon>Eukaryota</taxon>
        <taxon>Viridiplantae</taxon>
        <taxon>Streptophyta</taxon>
        <taxon>Embryophyta</taxon>
        <taxon>Tracheophyta</taxon>
        <taxon>Spermatophyta</taxon>
        <taxon>Pinopsida</taxon>
        <taxon>Pinidae</taxon>
        <taxon>Conifers I</taxon>
        <taxon>Pinales</taxon>
        <taxon>Pinaceae</taxon>
        <taxon>Picea</taxon>
    </lineage>
</organism>
<dbReference type="EMBL" id="AF051247">
    <property type="protein sequence ID" value="AAC32147.1"/>
    <property type="molecule type" value="mRNA"/>
</dbReference>
<dbReference type="SMR" id="O65085"/>
<dbReference type="UniPathway" id="UPA00378"/>
<dbReference type="GO" id="GO:0008250">
    <property type="term" value="C:oligosaccharyltransferase complex"/>
    <property type="evidence" value="ECO:0007669"/>
    <property type="project" value="InterPro"/>
</dbReference>
<dbReference type="GO" id="GO:0006487">
    <property type="term" value="P:protein N-linked glycosylation"/>
    <property type="evidence" value="ECO:0007669"/>
    <property type="project" value="TreeGrafter"/>
</dbReference>
<dbReference type="InterPro" id="IPR003038">
    <property type="entry name" value="DAD/Ost2"/>
</dbReference>
<dbReference type="PANTHER" id="PTHR10705">
    <property type="entry name" value="DOLICHYL-DIPHOSPHOOLIGOSACCHARIDE--PROTEIN GLYCOSYLTRANSFERASE SUBUNIT DAD1"/>
    <property type="match status" value="1"/>
</dbReference>
<dbReference type="PANTHER" id="PTHR10705:SF0">
    <property type="entry name" value="DOLICHYL-DIPHOSPHOOLIGOSACCHARIDE--PROTEIN GLYCOSYLTRANSFERASE SUBUNIT DAD1"/>
    <property type="match status" value="1"/>
</dbReference>
<dbReference type="Pfam" id="PF02109">
    <property type="entry name" value="DAD"/>
    <property type="match status" value="1"/>
</dbReference>
<dbReference type="PIRSF" id="PIRSF005588">
    <property type="entry name" value="DAD"/>
    <property type="match status" value="1"/>
</dbReference>
<gene>
    <name type="primary">DAD1</name>
    <name type="synonym">SB66</name>
</gene>